<keyword id="KW-0066">ATP synthesis</keyword>
<keyword id="KW-1003">Cell membrane</keyword>
<keyword id="KW-0138">CF(0)</keyword>
<keyword id="KW-0375">Hydrogen ion transport</keyword>
<keyword id="KW-0406">Ion transport</keyword>
<keyword id="KW-0472">Membrane</keyword>
<keyword id="KW-1185">Reference proteome</keyword>
<keyword id="KW-0812">Transmembrane</keyword>
<keyword id="KW-1133">Transmembrane helix</keyword>
<keyword id="KW-0813">Transport</keyword>
<comment type="function">
    <text evidence="1">Key component of the proton channel; it plays a direct role in the translocation of protons across the membrane.</text>
</comment>
<comment type="subunit">
    <text evidence="1">F-type ATPases have 2 components, CF(1) - the catalytic core - and CF(0) - the membrane proton channel. CF(1) has five subunits: alpha(3), beta(3), gamma(1), delta(1), epsilon(1). CF(0) has three main subunits: a(1), b(2) and c(9-12). The alpha and beta chains form an alternating ring which encloses part of the gamma chain. CF(1) is attached to CF(0) by a central stalk formed by the gamma and epsilon chains, while a peripheral stalk is formed by the delta and b chains.</text>
</comment>
<comment type="subcellular location">
    <subcellularLocation>
        <location evidence="1">Cell membrane</location>
        <topology evidence="1">Multi-pass membrane protein</topology>
    </subcellularLocation>
</comment>
<comment type="similarity">
    <text evidence="1">Belongs to the ATPase A chain family.</text>
</comment>
<reference key="1">
    <citation type="journal article" date="2002" name="Proc. Natl. Acad. Sci. U.S.A.">
        <title>Complete genome sequence and comparative genomic analysis of an emerging human pathogen, serotype V Streptococcus agalactiae.</title>
        <authorList>
            <person name="Tettelin H."/>
            <person name="Masignani V."/>
            <person name="Cieslewicz M.J."/>
            <person name="Eisen J.A."/>
            <person name="Peterson S.N."/>
            <person name="Wessels M.R."/>
            <person name="Paulsen I.T."/>
            <person name="Nelson K.E."/>
            <person name="Margarit I."/>
            <person name="Read T.D."/>
            <person name="Madoff L.C."/>
            <person name="Wolf A.M."/>
            <person name="Beanan M.J."/>
            <person name="Brinkac L.M."/>
            <person name="Daugherty S.C."/>
            <person name="DeBoy R.T."/>
            <person name="Durkin A.S."/>
            <person name="Kolonay J.F."/>
            <person name="Madupu R."/>
            <person name="Lewis M.R."/>
            <person name="Radune D."/>
            <person name="Fedorova N.B."/>
            <person name="Scanlan D."/>
            <person name="Khouri H.M."/>
            <person name="Mulligan S."/>
            <person name="Carty H.A."/>
            <person name="Cline R.T."/>
            <person name="Van Aken S.E."/>
            <person name="Gill J."/>
            <person name="Scarselli M."/>
            <person name="Mora M."/>
            <person name="Iacobini E.T."/>
            <person name="Brettoni C."/>
            <person name="Galli G."/>
            <person name="Mariani M."/>
            <person name="Vegni F."/>
            <person name="Maione D."/>
            <person name="Rinaudo D."/>
            <person name="Rappuoli R."/>
            <person name="Telford J.L."/>
            <person name="Kasper D.L."/>
            <person name="Grandi G."/>
            <person name="Fraser C.M."/>
        </authorList>
    </citation>
    <scope>NUCLEOTIDE SEQUENCE [LARGE SCALE GENOMIC DNA]</scope>
    <source>
        <strain>ATCC BAA-611 / 2603 V/R</strain>
    </source>
</reference>
<feature type="chain" id="PRO_0000362477" description="ATP synthase subunit a">
    <location>
        <begin position="1"/>
        <end position="238"/>
    </location>
</feature>
<feature type="transmembrane region" description="Helical" evidence="1">
    <location>
        <begin position="18"/>
        <end position="38"/>
    </location>
</feature>
<feature type="transmembrane region" description="Helical" evidence="1">
    <location>
        <begin position="75"/>
        <end position="95"/>
    </location>
</feature>
<feature type="transmembrane region" description="Helical" evidence="1">
    <location>
        <begin position="112"/>
        <end position="132"/>
    </location>
</feature>
<feature type="transmembrane region" description="Helical" evidence="1">
    <location>
        <begin position="179"/>
        <end position="199"/>
    </location>
</feature>
<feature type="transmembrane region" description="Helical" evidence="1">
    <location>
        <begin position="203"/>
        <end position="223"/>
    </location>
</feature>
<accession>Q8E077</accession>
<evidence type="ECO:0000255" key="1">
    <source>
        <dbReference type="HAMAP-Rule" id="MF_01393"/>
    </source>
</evidence>
<name>ATP6_STRA5</name>
<sequence length="238" mass="26447">MESTSNPTVSFLGIDFDLTILAMSLLTITIIFILVFWASRKMTIKPKGKQNVLEYVYELVNNTISQNLGHYTKNYSLLMFILFSFVFIANNLGLMTSLKTHEHNFWTSPTANFGVDITLSLLVAFICHIEGIRKKGIGGYLKGFLSPTPAMLPMNLLEEVTNVASLALRLFGNIFSGEVVTGLLLQLAVLSPFTGPLAFALNIVWTAFSMFIGFIQAYVFIILSSSYIGHKVHGDEEE</sequence>
<protein>
    <recommendedName>
        <fullName evidence="1">ATP synthase subunit a</fullName>
    </recommendedName>
    <alternativeName>
        <fullName evidence="1">ATP synthase F0 sector subunit a</fullName>
    </alternativeName>
    <alternativeName>
        <fullName evidence="1">F-ATPase subunit 6</fullName>
    </alternativeName>
</protein>
<gene>
    <name evidence="1" type="primary">atpB</name>
    <name type="ordered locus">SAG0858</name>
</gene>
<proteinExistence type="inferred from homology"/>
<dbReference type="EMBL" id="AE009948">
    <property type="protein sequence ID" value="AAM99744.1"/>
    <property type="molecule type" value="Genomic_DNA"/>
</dbReference>
<dbReference type="RefSeq" id="NP_687872.1">
    <property type="nucleotide sequence ID" value="NC_004116.1"/>
</dbReference>
<dbReference type="RefSeq" id="WP_000446421.1">
    <property type="nucleotide sequence ID" value="NC_004116.1"/>
</dbReference>
<dbReference type="SMR" id="Q8E077"/>
<dbReference type="STRING" id="208435.SAG0858"/>
<dbReference type="GeneID" id="66885808"/>
<dbReference type="KEGG" id="sag:SAG0858"/>
<dbReference type="PATRIC" id="fig|208435.3.peg.865"/>
<dbReference type="HOGENOM" id="CLU_041018_2_3_9"/>
<dbReference type="OrthoDB" id="9789241at2"/>
<dbReference type="Proteomes" id="UP000000821">
    <property type="component" value="Chromosome"/>
</dbReference>
<dbReference type="GO" id="GO:0005886">
    <property type="term" value="C:plasma membrane"/>
    <property type="evidence" value="ECO:0007669"/>
    <property type="project" value="UniProtKB-SubCell"/>
</dbReference>
<dbReference type="GO" id="GO:0045259">
    <property type="term" value="C:proton-transporting ATP synthase complex"/>
    <property type="evidence" value="ECO:0007669"/>
    <property type="project" value="UniProtKB-KW"/>
</dbReference>
<dbReference type="GO" id="GO:0046933">
    <property type="term" value="F:proton-transporting ATP synthase activity, rotational mechanism"/>
    <property type="evidence" value="ECO:0007669"/>
    <property type="project" value="UniProtKB-UniRule"/>
</dbReference>
<dbReference type="GO" id="GO:0042777">
    <property type="term" value="P:proton motive force-driven plasma membrane ATP synthesis"/>
    <property type="evidence" value="ECO:0007669"/>
    <property type="project" value="TreeGrafter"/>
</dbReference>
<dbReference type="CDD" id="cd00310">
    <property type="entry name" value="ATP-synt_Fo_a_6"/>
    <property type="match status" value="1"/>
</dbReference>
<dbReference type="Gene3D" id="1.20.120.220">
    <property type="entry name" value="ATP synthase, F0 complex, subunit A"/>
    <property type="match status" value="1"/>
</dbReference>
<dbReference type="HAMAP" id="MF_01393">
    <property type="entry name" value="ATP_synth_a_bact"/>
    <property type="match status" value="1"/>
</dbReference>
<dbReference type="InterPro" id="IPR045082">
    <property type="entry name" value="ATP_syn_F0_a_bact/chloroplast"/>
</dbReference>
<dbReference type="InterPro" id="IPR000568">
    <property type="entry name" value="ATP_synth_F0_asu"/>
</dbReference>
<dbReference type="InterPro" id="IPR023011">
    <property type="entry name" value="ATP_synth_F0_asu_AS"/>
</dbReference>
<dbReference type="InterPro" id="IPR035908">
    <property type="entry name" value="F0_ATP_A_sf"/>
</dbReference>
<dbReference type="NCBIfam" id="TIGR01131">
    <property type="entry name" value="ATP_synt_6_or_A"/>
    <property type="match status" value="1"/>
</dbReference>
<dbReference type="NCBIfam" id="NF004479">
    <property type="entry name" value="PRK05815.1-4"/>
    <property type="match status" value="1"/>
</dbReference>
<dbReference type="PANTHER" id="PTHR42823">
    <property type="entry name" value="ATP SYNTHASE SUBUNIT A, CHLOROPLASTIC"/>
    <property type="match status" value="1"/>
</dbReference>
<dbReference type="PANTHER" id="PTHR42823:SF3">
    <property type="entry name" value="ATP SYNTHASE SUBUNIT A, CHLOROPLASTIC"/>
    <property type="match status" value="1"/>
</dbReference>
<dbReference type="Pfam" id="PF00119">
    <property type="entry name" value="ATP-synt_A"/>
    <property type="match status" value="1"/>
</dbReference>
<dbReference type="PRINTS" id="PR00123">
    <property type="entry name" value="ATPASEA"/>
</dbReference>
<dbReference type="SUPFAM" id="SSF81336">
    <property type="entry name" value="F1F0 ATP synthase subunit A"/>
    <property type="match status" value="1"/>
</dbReference>
<dbReference type="PROSITE" id="PS00449">
    <property type="entry name" value="ATPASE_A"/>
    <property type="match status" value="1"/>
</dbReference>
<organism>
    <name type="scientific">Streptococcus agalactiae serotype V (strain ATCC BAA-611 / 2603 V/R)</name>
    <dbReference type="NCBI Taxonomy" id="208435"/>
    <lineage>
        <taxon>Bacteria</taxon>
        <taxon>Bacillati</taxon>
        <taxon>Bacillota</taxon>
        <taxon>Bacilli</taxon>
        <taxon>Lactobacillales</taxon>
        <taxon>Streptococcaceae</taxon>
        <taxon>Streptococcus</taxon>
    </lineage>
</organism>